<proteinExistence type="inferred from homology"/>
<accession>P0AB13</accession>
<accession>P37065</accession>
<accession>P75871</accession>
<sequence>MRTVLNILNFVLGGFATTLGWLLATLVSIVLIFTLPLTRSCWEITKLSLVPYGNEAIHVDELNPAGKNVLLNTGGTVLNIFWLIFFGWWLCLMHIATGIAQCISIIGIPVGIANFKIAAIALWPVGRRVVSVETAQAAREANARRRFE</sequence>
<keyword id="KW-0997">Cell inner membrane</keyword>
<keyword id="KW-1003">Cell membrane</keyword>
<keyword id="KW-0472">Membrane</keyword>
<keyword id="KW-1185">Reference proteome</keyword>
<keyword id="KW-0812">Transmembrane</keyword>
<keyword id="KW-1133">Transmembrane helix</keyword>
<name>YCCF_SHIFL</name>
<evidence type="ECO:0000250" key="1"/>
<evidence type="ECO:0000255" key="2"/>
<reference key="1">
    <citation type="journal article" date="2002" name="Nucleic Acids Res.">
        <title>Genome sequence of Shigella flexneri 2a: insights into pathogenicity through comparison with genomes of Escherichia coli K12 and O157.</title>
        <authorList>
            <person name="Jin Q."/>
            <person name="Yuan Z."/>
            <person name="Xu J."/>
            <person name="Wang Y."/>
            <person name="Shen Y."/>
            <person name="Lu W."/>
            <person name="Wang J."/>
            <person name="Liu H."/>
            <person name="Yang J."/>
            <person name="Yang F."/>
            <person name="Zhang X."/>
            <person name="Zhang J."/>
            <person name="Yang G."/>
            <person name="Wu H."/>
            <person name="Qu D."/>
            <person name="Dong J."/>
            <person name="Sun L."/>
            <person name="Xue Y."/>
            <person name="Zhao A."/>
            <person name="Gao Y."/>
            <person name="Zhu J."/>
            <person name="Kan B."/>
            <person name="Ding K."/>
            <person name="Chen S."/>
            <person name="Cheng H."/>
            <person name="Yao Z."/>
            <person name="He B."/>
            <person name="Chen R."/>
            <person name="Ma D."/>
            <person name="Qiang B."/>
            <person name="Wen Y."/>
            <person name="Hou Y."/>
            <person name="Yu J."/>
        </authorList>
    </citation>
    <scope>NUCLEOTIDE SEQUENCE [LARGE SCALE GENOMIC DNA]</scope>
    <source>
        <strain>301 / Serotype 2a</strain>
    </source>
</reference>
<reference key="2">
    <citation type="journal article" date="2003" name="Infect. Immun.">
        <title>Complete genome sequence and comparative genomics of Shigella flexneri serotype 2a strain 2457T.</title>
        <authorList>
            <person name="Wei J."/>
            <person name="Goldberg M.B."/>
            <person name="Burland V."/>
            <person name="Venkatesan M.M."/>
            <person name="Deng W."/>
            <person name="Fournier G."/>
            <person name="Mayhew G.F."/>
            <person name="Plunkett G. III"/>
            <person name="Rose D.J."/>
            <person name="Darling A."/>
            <person name="Mau B."/>
            <person name="Perna N.T."/>
            <person name="Payne S.M."/>
            <person name="Runyen-Janecky L.J."/>
            <person name="Zhou S."/>
            <person name="Schwartz D.C."/>
            <person name="Blattner F.R."/>
        </authorList>
    </citation>
    <scope>NUCLEOTIDE SEQUENCE [LARGE SCALE GENOMIC DNA]</scope>
    <source>
        <strain>ATCC 700930 / 2457T / Serotype 2a</strain>
    </source>
</reference>
<organism>
    <name type="scientific">Shigella flexneri</name>
    <dbReference type="NCBI Taxonomy" id="623"/>
    <lineage>
        <taxon>Bacteria</taxon>
        <taxon>Pseudomonadati</taxon>
        <taxon>Pseudomonadota</taxon>
        <taxon>Gammaproteobacteria</taxon>
        <taxon>Enterobacterales</taxon>
        <taxon>Enterobacteriaceae</taxon>
        <taxon>Shigella</taxon>
    </lineage>
</organism>
<protein>
    <recommendedName>
        <fullName>Inner membrane protein YccF</fullName>
    </recommendedName>
</protein>
<dbReference type="EMBL" id="AE005674">
    <property type="protein sequence ID" value="AAN42591.1"/>
    <property type="molecule type" value="Genomic_DNA"/>
</dbReference>
<dbReference type="EMBL" id="AE014073">
    <property type="protein sequence ID" value="AAP16477.1"/>
    <property type="molecule type" value="Genomic_DNA"/>
</dbReference>
<dbReference type="RefSeq" id="NP_706884.1">
    <property type="nucleotide sequence ID" value="NC_004337.2"/>
</dbReference>
<dbReference type="RefSeq" id="WP_001261235.1">
    <property type="nucleotide sequence ID" value="NZ_WPGW01000043.1"/>
</dbReference>
<dbReference type="STRING" id="198214.SF0963"/>
<dbReference type="PaxDb" id="198214-SF0963"/>
<dbReference type="GeneID" id="1027559"/>
<dbReference type="KEGG" id="sfl:SF0963"/>
<dbReference type="KEGG" id="sfx:S1029"/>
<dbReference type="PATRIC" id="fig|198214.7.peg.1121"/>
<dbReference type="HOGENOM" id="CLU_120384_0_0_6"/>
<dbReference type="Proteomes" id="UP000001006">
    <property type="component" value="Chromosome"/>
</dbReference>
<dbReference type="Proteomes" id="UP000002673">
    <property type="component" value="Chromosome"/>
</dbReference>
<dbReference type="GO" id="GO:0005886">
    <property type="term" value="C:plasma membrane"/>
    <property type="evidence" value="ECO:0007669"/>
    <property type="project" value="UniProtKB-SubCell"/>
</dbReference>
<dbReference type="InterPro" id="IPR052937">
    <property type="entry name" value="Inner_membrane_protein"/>
</dbReference>
<dbReference type="InterPro" id="IPR031308">
    <property type="entry name" value="UCP028777"/>
</dbReference>
<dbReference type="InterPro" id="IPR005185">
    <property type="entry name" value="YccF"/>
</dbReference>
<dbReference type="NCBIfam" id="NF008739">
    <property type="entry name" value="PRK11770.1-1"/>
    <property type="match status" value="1"/>
</dbReference>
<dbReference type="PANTHER" id="PTHR42903">
    <property type="entry name" value="INNER MEMBRANE PROTEIN YCCF"/>
    <property type="match status" value="1"/>
</dbReference>
<dbReference type="PANTHER" id="PTHR42903:SF1">
    <property type="entry name" value="INNER MEMBRANE PROTEIN YCCF"/>
    <property type="match status" value="1"/>
</dbReference>
<dbReference type="Pfam" id="PF03733">
    <property type="entry name" value="YccF"/>
    <property type="match status" value="2"/>
</dbReference>
<dbReference type="PIRSF" id="PIRSF028777">
    <property type="entry name" value="UCP028777"/>
    <property type="match status" value="1"/>
</dbReference>
<feature type="chain" id="PRO_0000168784" description="Inner membrane protein YccF">
    <location>
        <begin position="1"/>
        <end position="148"/>
    </location>
</feature>
<feature type="topological domain" description="Periplasmic" evidence="2">
    <location>
        <begin position="1"/>
        <end position="14"/>
    </location>
</feature>
<feature type="transmembrane region" description="Helical" evidence="2">
    <location>
        <begin position="15"/>
        <end position="37"/>
    </location>
</feature>
<feature type="topological domain" description="Cytoplasmic" evidence="2">
    <location>
        <begin position="38"/>
        <end position="76"/>
    </location>
</feature>
<feature type="transmembrane region" description="Helical" evidence="2">
    <location>
        <begin position="77"/>
        <end position="99"/>
    </location>
</feature>
<feature type="topological domain" description="Periplasmic" evidence="2">
    <location>
        <begin position="100"/>
        <end position="102"/>
    </location>
</feature>
<feature type="transmembrane region" description="Helical" evidence="2">
    <location>
        <begin position="103"/>
        <end position="125"/>
    </location>
</feature>
<feature type="topological domain" description="Cytoplasmic" evidence="2">
    <location>
        <begin position="126"/>
        <end position="148"/>
    </location>
</feature>
<gene>
    <name type="primary">yccF</name>
    <name type="ordered locus">SF0963</name>
    <name type="ordered locus">S1029</name>
</gene>
<comment type="subcellular location">
    <subcellularLocation>
        <location evidence="1">Cell inner membrane</location>
        <topology evidence="1">Multi-pass membrane protein</topology>
    </subcellularLocation>
</comment>